<gene>
    <name type="primary">PLBD1</name>
</gene>
<name>PLBL1_HUMAN</name>
<sequence length="553" mass="63255">MTRGGPGGRPGLPQPPPLLLLLLLLPLLLVTAEPPKPAGVYYATAYWMPAEKTVQVKNVMDKNGDAYGFYNNSVKTTGWGILEIRAGYGSQTLSNEIIMFVAGFLEGYLTAPHMNDHYTNLYPQLITKPSIMDKVQDFMEKQDKWTRKNIKEYKTDSFWRHTGYVMAQIDGLYVGAKKRAILEGTKPMTLFQIQFLNSVGDLLDLIPSLSPTKNGSLKVFKRWDMGHCSALIKVLPGFENILFAHSSWYTYAAMLRIYKHWDFNVIDKDTSSSRLSFSSYPGFLESLDDFYILSSGLILLQTTNSVFNKTLLKQVIPETLLSWQRVRVANMMADSGKRWADIFSKYNSGTYNNQYMVLDLKKVKLNHSLDKGTLYIVEQIPTYVEYSEQTDVLRKGYWPSYNVPFHEKIYNWSGYPLLVQKLGLDYSYDLAPRAKIFRRDQGKVTDTASMKYIMRYNNYKKDPYSRGDPCNTICCREDLNSPNPSPGGCYDTKVADIYLASQYTSYAISGPTVQGGLPVFRWDRFNKTLHQGMPEVYNFDFITMKPILKLDIK</sequence>
<evidence type="ECO:0000250" key="1"/>
<evidence type="ECO:0000255" key="2"/>
<evidence type="ECO:0000269" key="3">
    <source>
    </source>
</evidence>
<evidence type="ECO:0000269" key="4">
    <source>
    </source>
</evidence>
<evidence type="ECO:0000269" key="5">
    <source>
    </source>
</evidence>
<evidence type="ECO:0000269" key="6">
    <source>
    </source>
</evidence>
<evidence type="ECO:0000305" key="7"/>
<proteinExistence type="evidence at protein level"/>
<feature type="signal peptide" evidence="2">
    <location>
        <begin position="1"/>
        <end position="38"/>
    </location>
</feature>
<feature type="chain" id="PRO_0000286106" description="Phospholipase B-like 1">
    <location>
        <begin position="39"/>
        <end position="553"/>
    </location>
</feature>
<feature type="chain" id="PRO_0000425421" description="Phospholipase B-like 1 chain A">
    <location>
        <begin position="39"/>
        <end position="208"/>
    </location>
</feature>
<feature type="chain" id="PRO_0000425422" description="Phospholipase B-like 1 chain C">
    <location>
        <begin position="93"/>
        <end position="208"/>
    </location>
</feature>
<feature type="propeptide" id="PRO_0000425423" description="Removed in mature form" evidence="1">
    <location>
        <begin position="209"/>
        <end position="227"/>
    </location>
</feature>
<feature type="chain" id="PRO_0000425424" description="Phospholipase B-like 1 chain B">
    <location>
        <begin position="228"/>
        <end position="553"/>
    </location>
</feature>
<feature type="glycosylation site" description="N-linked (GlcNAc...) (high mannose) asparagine; alternate" evidence="1">
    <location>
        <position position="71"/>
    </location>
</feature>
<feature type="glycosylation site" description="N-linked (GlcNAc...) (hybrid) asparagine; alternate" evidence="1">
    <location>
        <position position="71"/>
    </location>
</feature>
<feature type="glycosylation site" description="N-linked (GlcNAc...) (high mannose) asparagine; alternate" evidence="1">
    <location>
        <position position="308"/>
    </location>
</feature>
<feature type="glycosylation site" description="N-linked (GlcNAc...) (hybrid) asparagine; alternate" evidence="1">
    <location>
        <position position="308"/>
    </location>
</feature>
<feature type="glycosylation site" description="N-linked (GlcNAc...) (high mannose) asparagine; alternate" evidence="1">
    <location>
        <position position="366"/>
    </location>
</feature>
<feature type="glycosylation site" description="N-linked (GlcNAc...) (hybrid) asparagine; alternate" evidence="1">
    <location>
        <position position="366"/>
    </location>
</feature>
<feature type="glycosylation site" description="N-linked (GlcNAc...) asparagine" evidence="6">
    <location>
        <position position="411"/>
    </location>
</feature>
<feature type="glycosylation site" description="N-linked (GlcNAc...) (high mannose) asparagine; alternate" evidence="1">
    <location>
        <position position="526"/>
    </location>
</feature>
<feature type="glycosylation site" description="N-linked (GlcNAc...) (hybrid) asparagine; alternate" evidence="1">
    <location>
        <position position="526"/>
    </location>
</feature>
<feature type="disulfide bond" evidence="1">
    <location>
        <begin position="470"/>
        <end position="475"/>
    </location>
</feature>
<feature type="disulfide bond" evidence="1">
    <location>
        <begin position="474"/>
        <end position="489"/>
    </location>
</feature>
<feature type="sequence variant" id="VAR_032072" description="In dbSNP:rs7957558." evidence="3 4">
    <original>V</original>
    <variation>I</variation>
    <location>
        <position position="265"/>
    </location>
</feature>
<feature type="sequence variant" id="VAR_032073" description="In dbSNP:rs2287541.">
    <original>V</original>
    <variation>A</variation>
    <location>
        <position position="377"/>
    </location>
</feature>
<feature type="sequence variant" id="VAR_032074" description="In dbSNP:rs1600." evidence="4">
    <original>P</original>
    <variation>A</variation>
    <location>
        <position position="534"/>
    </location>
</feature>
<feature type="sequence conflict" description="In Ref. 1; BAF83603 and 3; AAH63561." evidence="7" ref="1 3">
    <location>
        <position position="18"/>
    </location>
</feature>
<feature type="sequence conflict" description="In Ref. 3; BAB15442." evidence="7" ref="3">
    <original>I</original>
    <variation>V</variation>
    <location>
        <position position="241"/>
    </location>
</feature>
<feature type="sequence conflict" description="In Ref. 1; BAF83603." evidence="7" ref="1">
    <original>T</original>
    <variation>A</variation>
    <location>
        <position position="302"/>
    </location>
</feature>
<protein>
    <recommendedName>
        <fullName>Phospholipase B-like 1</fullName>
        <ecNumber>3.1.1.-</ecNumber>
    </recommendedName>
    <alternativeName>
        <fullName>LAMA-like protein 1</fullName>
    </alternativeName>
    <alternativeName>
        <fullName>Lamina ancestor homolog 1</fullName>
    </alternativeName>
    <alternativeName>
        <fullName>Phospholipase B domain-containing protein 1</fullName>
    </alternativeName>
    <component>
        <recommendedName>
            <fullName>Phospholipase B-like 1 chain A</fullName>
        </recommendedName>
    </component>
    <component>
        <recommendedName>
            <fullName>Phospholipase B-like 1 chain B</fullName>
        </recommendedName>
    </component>
    <component>
        <recommendedName>
            <fullName>Phospholipase B-like 1 chain C</fullName>
        </recommendedName>
    </component>
</protein>
<reference key="1">
    <citation type="journal article" date="2004" name="Nat. Genet.">
        <title>Complete sequencing and characterization of 21,243 full-length human cDNAs.</title>
        <authorList>
            <person name="Ota T."/>
            <person name="Suzuki Y."/>
            <person name="Nishikawa T."/>
            <person name="Otsuki T."/>
            <person name="Sugiyama T."/>
            <person name="Irie R."/>
            <person name="Wakamatsu A."/>
            <person name="Hayashi K."/>
            <person name="Sato H."/>
            <person name="Nagai K."/>
            <person name="Kimura K."/>
            <person name="Makita H."/>
            <person name="Sekine M."/>
            <person name="Obayashi M."/>
            <person name="Nishi T."/>
            <person name="Shibahara T."/>
            <person name="Tanaka T."/>
            <person name="Ishii S."/>
            <person name="Yamamoto J."/>
            <person name="Saito K."/>
            <person name="Kawai Y."/>
            <person name="Isono Y."/>
            <person name="Nakamura Y."/>
            <person name="Nagahari K."/>
            <person name="Murakami K."/>
            <person name="Yasuda T."/>
            <person name="Iwayanagi T."/>
            <person name="Wagatsuma M."/>
            <person name="Shiratori A."/>
            <person name="Sudo H."/>
            <person name="Hosoiri T."/>
            <person name="Kaku Y."/>
            <person name="Kodaira H."/>
            <person name="Kondo H."/>
            <person name="Sugawara M."/>
            <person name="Takahashi M."/>
            <person name="Kanda K."/>
            <person name="Yokoi T."/>
            <person name="Furuya T."/>
            <person name="Kikkawa E."/>
            <person name="Omura Y."/>
            <person name="Abe K."/>
            <person name="Kamihara K."/>
            <person name="Katsuta N."/>
            <person name="Sato K."/>
            <person name="Tanikawa M."/>
            <person name="Yamazaki M."/>
            <person name="Ninomiya K."/>
            <person name="Ishibashi T."/>
            <person name="Yamashita H."/>
            <person name="Murakawa K."/>
            <person name="Fujimori K."/>
            <person name="Tanai H."/>
            <person name="Kimata M."/>
            <person name="Watanabe M."/>
            <person name="Hiraoka S."/>
            <person name="Chiba Y."/>
            <person name="Ishida S."/>
            <person name="Ono Y."/>
            <person name="Takiguchi S."/>
            <person name="Watanabe S."/>
            <person name="Yosida M."/>
            <person name="Hotuta T."/>
            <person name="Kusano J."/>
            <person name="Kanehori K."/>
            <person name="Takahashi-Fujii A."/>
            <person name="Hara H."/>
            <person name="Tanase T.-O."/>
            <person name="Nomura Y."/>
            <person name="Togiya S."/>
            <person name="Komai F."/>
            <person name="Hara R."/>
            <person name="Takeuchi K."/>
            <person name="Arita M."/>
            <person name="Imose N."/>
            <person name="Musashino K."/>
            <person name="Yuuki H."/>
            <person name="Oshima A."/>
            <person name="Sasaki N."/>
            <person name="Aotsuka S."/>
            <person name="Yoshikawa Y."/>
            <person name="Matsunawa H."/>
            <person name="Ichihara T."/>
            <person name="Shiohata N."/>
            <person name="Sano S."/>
            <person name="Moriya S."/>
            <person name="Momiyama H."/>
            <person name="Satoh N."/>
            <person name="Takami S."/>
            <person name="Terashima Y."/>
            <person name="Suzuki O."/>
            <person name="Nakagawa S."/>
            <person name="Senoh A."/>
            <person name="Mizoguchi H."/>
            <person name="Goto Y."/>
            <person name="Shimizu F."/>
            <person name="Wakebe H."/>
            <person name="Hishigaki H."/>
            <person name="Watanabe T."/>
            <person name="Sugiyama A."/>
            <person name="Takemoto M."/>
            <person name="Kawakami B."/>
            <person name="Yamazaki M."/>
            <person name="Watanabe K."/>
            <person name="Kumagai A."/>
            <person name="Itakura S."/>
            <person name="Fukuzumi Y."/>
            <person name="Fujimori Y."/>
            <person name="Komiyama M."/>
            <person name="Tashiro H."/>
            <person name="Tanigami A."/>
            <person name="Fujiwara T."/>
            <person name="Ono T."/>
            <person name="Yamada K."/>
            <person name="Fujii Y."/>
            <person name="Ozaki K."/>
            <person name="Hirao M."/>
            <person name="Ohmori Y."/>
            <person name="Kawabata A."/>
            <person name="Hikiji T."/>
            <person name="Kobatake N."/>
            <person name="Inagaki H."/>
            <person name="Ikema Y."/>
            <person name="Okamoto S."/>
            <person name="Okitani R."/>
            <person name="Kawakami T."/>
            <person name="Noguchi S."/>
            <person name="Itoh T."/>
            <person name="Shigeta K."/>
            <person name="Senba T."/>
            <person name="Matsumura K."/>
            <person name="Nakajima Y."/>
            <person name="Mizuno T."/>
            <person name="Morinaga M."/>
            <person name="Sasaki M."/>
            <person name="Togashi T."/>
            <person name="Oyama M."/>
            <person name="Hata H."/>
            <person name="Watanabe M."/>
            <person name="Komatsu T."/>
            <person name="Mizushima-Sugano J."/>
            <person name="Satoh T."/>
            <person name="Shirai Y."/>
            <person name="Takahashi Y."/>
            <person name="Nakagawa K."/>
            <person name="Okumura K."/>
            <person name="Nagase T."/>
            <person name="Nomura N."/>
            <person name="Kikuchi H."/>
            <person name="Masuho Y."/>
            <person name="Yamashita R."/>
            <person name="Nakai K."/>
            <person name="Yada T."/>
            <person name="Nakamura Y."/>
            <person name="Ohara O."/>
            <person name="Isogai T."/>
            <person name="Sugano S."/>
        </authorList>
    </citation>
    <scope>NUCLEOTIDE SEQUENCE [LARGE SCALE MRNA]</scope>
    <scope>VARIANT ILE-265</scope>
    <source>
        <tissue>Neutrophil</tissue>
        <tissue>Small intestine</tissue>
    </source>
</reference>
<reference key="2">
    <citation type="journal article" date="2006" name="Nature">
        <title>The finished DNA sequence of human chromosome 12.</title>
        <authorList>
            <person name="Scherer S.E."/>
            <person name="Muzny D.M."/>
            <person name="Buhay C.J."/>
            <person name="Chen R."/>
            <person name="Cree A."/>
            <person name="Ding Y."/>
            <person name="Dugan-Rocha S."/>
            <person name="Gill R."/>
            <person name="Gunaratne P."/>
            <person name="Harris R.A."/>
            <person name="Hawes A.C."/>
            <person name="Hernandez J."/>
            <person name="Hodgson A.V."/>
            <person name="Hume J."/>
            <person name="Jackson A."/>
            <person name="Khan Z.M."/>
            <person name="Kovar-Smith C."/>
            <person name="Lewis L.R."/>
            <person name="Lozado R.J."/>
            <person name="Metzker M.L."/>
            <person name="Milosavljevic A."/>
            <person name="Miner G.R."/>
            <person name="Montgomery K.T."/>
            <person name="Morgan M.B."/>
            <person name="Nazareth L.V."/>
            <person name="Scott G."/>
            <person name="Sodergren E."/>
            <person name="Song X.-Z."/>
            <person name="Steffen D."/>
            <person name="Lovering R.C."/>
            <person name="Wheeler D.A."/>
            <person name="Worley K.C."/>
            <person name="Yuan Y."/>
            <person name="Zhang Z."/>
            <person name="Adams C.Q."/>
            <person name="Ansari-Lari M.A."/>
            <person name="Ayele M."/>
            <person name="Brown M.J."/>
            <person name="Chen G."/>
            <person name="Chen Z."/>
            <person name="Clerc-Blankenburg K.P."/>
            <person name="Davis C."/>
            <person name="Delgado O."/>
            <person name="Dinh H.H."/>
            <person name="Draper H."/>
            <person name="Gonzalez-Garay M.L."/>
            <person name="Havlak P."/>
            <person name="Jackson L.R."/>
            <person name="Jacob L.S."/>
            <person name="Kelly S.H."/>
            <person name="Li L."/>
            <person name="Li Z."/>
            <person name="Liu J."/>
            <person name="Liu W."/>
            <person name="Lu J."/>
            <person name="Maheshwari M."/>
            <person name="Nguyen B.-V."/>
            <person name="Okwuonu G.O."/>
            <person name="Pasternak S."/>
            <person name="Perez L.M."/>
            <person name="Plopper F.J.H."/>
            <person name="Santibanez J."/>
            <person name="Shen H."/>
            <person name="Tabor P.E."/>
            <person name="Verduzco D."/>
            <person name="Waldron L."/>
            <person name="Wang Q."/>
            <person name="Williams G.A."/>
            <person name="Zhang J."/>
            <person name="Zhou J."/>
            <person name="Allen C.C."/>
            <person name="Amin A.G."/>
            <person name="Anyalebechi V."/>
            <person name="Bailey M."/>
            <person name="Barbaria J.A."/>
            <person name="Bimage K.E."/>
            <person name="Bryant N.P."/>
            <person name="Burch P.E."/>
            <person name="Burkett C.E."/>
            <person name="Burrell K.L."/>
            <person name="Calderon E."/>
            <person name="Cardenas V."/>
            <person name="Carter K."/>
            <person name="Casias K."/>
            <person name="Cavazos I."/>
            <person name="Cavazos S.R."/>
            <person name="Ceasar H."/>
            <person name="Chacko J."/>
            <person name="Chan S.N."/>
            <person name="Chavez D."/>
            <person name="Christopoulos C."/>
            <person name="Chu J."/>
            <person name="Cockrell R."/>
            <person name="Cox C.D."/>
            <person name="Dang M."/>
            <person name="Dathorne S.R."/>
            <person name="David R."/>
            <person name="Davis C.M."/>
            <person name="Davy-Carroll L."/>
            <person name="Deshazo D.R."/>
            <person name="Donlin J.E."/>
            <person name="D'Souza L."/>
            <person name="Eaves K.A."/>
            <person name="Egan A."/>
            <person name="Emery-Cohen A.J."/>
            <person name="Escotto M."/>
            <person name="Flagg N."/>
            <person name="Forbes L.D."/>
            <person name="Gabisi A.M."/>
            <person name="Garza M."/>
            <person name="Hamilton C."/>
            <person name="Henderson N."/>
            <person name="Hernandez O."/>
            <person name="Hines S."/>
            <person name="Hogues M.E."/>
            <person name="Huang M."/>
            <person name="Idlebird D.G."/>
            <person name="Johnson R."/>
            <person name="Jolivet A."/>
            <person name="Jones S."/>
            <person name="Kagan R."/>
            <person name="King L.M."/>
            <person name="Leal B."/>
            <person name="Lebow H."/>
            <person name="Lee S."/>
            <person name="LeVan J.M."/>
            <person name="Lewis L.C."/>
            <person name="London P."/>
            <person name="Lorensuhewa L.M."/>
            <person name="Loulseged H."/>
            <person name="Lovett D.A."/>
            <person name="Lucier A."/>
            <person name="Lucier R.L."/>
            <person name="Ma J."/>
            <person name="Madu R.C."/>
            <person name="Mapua P."/>
            <person name="Martindale A.D."/>
            <person name="Martinez E."/>
            <person name="Massey E."/>
            <person name="Mawhiney S."/>
            <person name="Meador M.G."/>
            <person name="Mendez S."/>
            <person name="Mercado C."/>
            <person name="Mercado I.C."/>
            <person name="Merritt C.E."/>
            <person name="Miner Z.L."/>
            <person name="Minja E."/>
            <person name="Mitchell T."/>
            <person name="Mohabbat F."/>
            <person name="Mohabbat K."/>
            <person name="Montgomery B."/>
            <person name="Moore N."/>
            <person name="Morris S."/>
            <person name="Munidasa M."/>
            <person name="Ngo R.N."/>
            <person name="Nguyen N.B."/>
            <person name="Nickerson E."/>
            <person name="Nwaokelemeh O.O."/>
            <person name="Nwokenkwo S."/>
            <person name="Obregon M."/>
            <person name="Oguh M."/>
            <person name="Oragunye N."/>
            <person name="Oviedo R.J."/>
            <person name="Parish B.J."/>
            <person name="Parker D.N."/>
            <person name="Parrish J."/>
            <person name="Parks K.L."/>
            <person name="Paul H.A."/>
            <person name="Payton B.A."/>
            <person name="Perez A."/>
            <person name="Perrin W."/>
            <person name="Pickens A."/>
            <person name="Primus E.L."/>
            <person name="Pu L.-L."/>
            <person name="Puazo M."/>
            <person name="Quiles M.M."/>
            <person name="Quiroz J.B."/>
            <person name="Rabata D."/>
            <person name="Reeves K."/>
            <person name="Ruiz S.J."/>
            <person name="Shao H."/>
            <person name="Sisson I."/>
            <person name="Sonaike T."/>
            <person name="Sorelle R.P."/>
            <person name="Sutton A.E."/>
            <person name="Svatek A.F."/>
            <person name="Svetz L.A."/>
            <person name="Tamerisa K.S."/>
            <person name="Taylor T.R."/>
            <person name="Teague B."/>
            <person name="Thomas N."/>
            <person name="Thorn R.D."/>
            <person name="Trejos Z.Y."/>
            <person name="Trevino B.K."/>
            <person name="Ukegbu O.N."/>
            <person name="Urban J.B."/>
            <person name="Vasquez L.I."/>
            <person name="Vera V.A."/>
            <person name="Villasana D.M."/>
            <person name="Wang L."/>
            <person name="Ward-Moore S."/>
            <person name="Warren J.T."/>
            <person name="Wei X."/>
            <person name="White F."/>
            <person name="Williamson A.L."/>
            <person name="Wleczyk R."/>
            <person name="Wooden H.S."/>
            <person name="Wooden S.H."/>
            <person name="Yen J."/>
            <person name="Yoon L."/>
            <person name="Yoon V."/>
            <person name="Zorrilla S.E."/>
            <person name="Nelson D."/>
            <person name="Kucherlapati R."/>
            <person name="Weinstock G."/>
            <person name="Gibbs R.A."/>
        </authorList>
    </citation>
    <scope>NUCLEOTIDE SEQUENCE [LARGE SCALE GENOMIC DNA]</scope>
</reference>
<reference key="3">
    <citation type="journal article" date="2004" name="Genome Res.">
        <title>The status, quality, and expansion of the NIH full-length cDNA project: the Mammalian Gene Collection (MGC).</title>
        <authorList>
            <consortium name="The MGC Project Team"/>
        </authorList>
    </citation>
    <scope>NUCLEOTIDE SEQUENCE [LARGE SCALE MRNA]</scope>
    <scope>VARIANTS ILE-265 AND ALA-534</scope>
    <source>
        <tissue>Placenta</tissue>
    </source>
</reference>
<reference key="4">
    <citation type="journal article" date="2009" name="FEBS J.">
        <title>The identification of a phospholipase B precursor in human neutrophils.</title>
        <authorList>
            <person name="Xu S."/>
            <person name="Zhao L."/>
            <person name="Larsson A."/>
            <person name="Venge P."/>
        </authorList>
    </citation>
    <scope>CATALYTIC ACTIVITY</scope>
    <scope>FUNCTION</scope>
    <scope>SUBUNIT</scope>
    <scope>PROTEOLYTIC PROCESSING</scope>
    <scope>SUBCELLULAR LOCATION</scope>
    <scope>BIOPHYSICOCHEMICAL PROPERTIES</scope>
    <scope>TISSUE SPECIFICITY</scope>
    <source>
        <tissue>Granulocyte</tissue>
    </source>
</reference>
<reference key="5">
    <citation type="journal article" date="2009" name="J. Proteome Res.">
        <title>Glycoproteomics analysis of human liver tissue by combination of multiple enzyme digestion and hydrazide chemistry.</title>
        <authorList>
            <person name="Chen R."/>
            <person name="Jiang X."/>
            <person name="Sun D."/>
            <person name="Han G."/>
            <person name="Wang F."/>
            <person name="Ye M."/>
            <person name="Wang L."/>
            <person name="Zou H."/>
        </authorList>
    </citation>
    <scope>GLYCOSYLATION [LARGE SCALE ANALYSIS] AT ASN-411</scope>
    <source>
        <tissue>Liver</tissue>
    </source>
</reference>
<keyword id="KW-1015">Disulfide bond</keyword>
<keyword id="KW-0325">Glycoprotein</keyword>
<keyword id="KW-0378">Hydrolase</keyword>
<keyword id="KW-0442">Lipid degradation</keyword>
<keyword id="KW-0443">Lipid metabolism</keyword>
<keyword id="KW-0458">Lysosome</keyword>
<keyword id="KW-1267">Proteomics identification</keyword>
<keyword id="KW-1185">Reference proteome</keyword>
<keyword id="KW-0732">Signal</keyword>
<organism>
    <name type="scientific">Homo sapiens</name>
    <name type="common">Human</name>
    <dbReference type="NCBI Taxonomy" id="9606"/>
    <lineage>
        <taxon>Eukaryota</taxon>
        <taxon>Metazoa</taxon>
        <taxon>Chordata</taxon>
        <taxon>Craniata</taxon>
        <taxon>Vertebrata</taxon>
        <taxon>Euteleostomi</taxon>
        <taxon>Mammalia</taxon>
        <taxon>Eutheria</taxon>
        <taxon>Euarchontoglires</taxon>
        <taxon>Primates</taxon>
        <taxon>Haplorrhini</taxon>
        <taxon>Catarrhini</taxon>
        <taxon>Hominidae</taxon>
        <taxon>Homo</taxon>
    </lineage>
</organism>
<comment type="function">
    <text evidence="1 5">In view of the small size of the putative binding pocket, it has been proposed that it may act as an amidase or a peptidase (By similarity). Exhibits a weak phospholipase activity, acting on various phospholipids, including phosphatidylcholine, phosphatidylinositol, phosphatidylethanolamine and lysophospholipids.</text>
</comment>
<comment type="biophysicochemical properties">
    <phDependence>
        <text evidence="5">Optimum pH is 7.4.</text>
    </phDependence>
</comment>
<comment type="subunit">
    <text evidence="5">May form a homodimer, each monomer is composed of a chain A and a chain B.</text>
</comment>
<comment type="subcellular location">
    <subcellularLocation>
        <location evidence="1">Lysosome</location>
    </subcellularLocation>
</comment>
<comment type="tissue specificity">
    <text evidence="5">Expressed in neutrophils and monocytes.</text>
</comment>
<comment type="PTM">
    <text evidence="5">The maturation cleavages that produces chains A and B are required to open the putative substrate binding pocket. Both chains A and B remain associated in the mature protein.</text>
</comment>
<comment type="similarity">
    <text evidence="7">Belongs to the phospholipase B-like family.</text>
</comment>
<comment type="sequence caution" evidence="7">
    <conflict type="erroneous initiation">
        <sequence resource="EMBL-CDS" id="AAH00909"/>
    </conflict>
</comment>
<comment type="sequence caution" evidence="7">
    <conflict type="erroneous initiation">
        <sequence resource="EMBL-CDS" id="BAB15442"/>
    </conflict>
</comment>
<dbReference type="EC" id="3.1.1.-"/>
<dbReference type="EMBL" id="AK026315">
    <property type="protein sequence ID" value="BAB15442.1"/>
    <property type="status" value="ALT_INIT"/>
    <property type="molecule type" value="mRNA"/>
</dbReference>
<dbReference type="EMBL" id="AK290914">
    <property type="protein sequence ID" value="BAF83603.1"/>
    <property type="molecule type" value="mRNA"/>
</dbReference>
<dbReference type="EMBL" id="AC008114">
    <property type="status" value="NOT_ANNOTATED_CDS"/>
    <property type="molecule type" value="Genomic_DNA"/>
</dbReference>
<dbReference type="EMBL" id="BC000909">
    <property type="protein sequence ID" value="AAH00909.2"/>
    <property type="status" value="ALT_INIT"/>
    <property type="molecule type" value="mRNA"/>
</dbReference>
<dbReference type="EMBL" id="BC063561">
    <property type="protein sequence ID" value="AAH63561.1"/>
    <property type="molecule type" value="mRNA"/>
</dbReference>
<dbReference type="CCDS" id="CCDS31751.1"/>
<dbReference type="RefSeq" id="NP_079105.4">
    <property type="nucleotide sequence ID" value="NM_024829.5"/>
</dbReference>
<dbReference type="SMR" id="Q6P4A8"/>
<dbReference type="BioGRID" id="122972">
    <property type="interactions" value="133"/>
</dbReference>
<dbReference type="FunCoup" id="Q6P4A8">
    <property type="interactions" value="260"/>
</dbReference>
<dbReference type="IntAct" id="Q6P4A8">
    <property type="interactions" value="85"/>
</dbReference>
<dbReference type="MINT" id="Q6P4A8"/>
<dbReference type="STRING" id="9606.ENSP00000240617"/>
<dbReference type="GlyConnect" id="1603">
    <property type="glycosylation" value="12 N-Linked glycans (3 sites)"/>
</dbReference>
<dbReference type="GlyCosmos" id="Q6P4A8">
    <property type="glycosylation" value="5 sites, 11 glycans"/>
</dbReference>
<dbReference type="GlyGen" id="Q6P4A8">
    <property type="glycosylation" value="7 sites, 28 N-linked glycans (3 sites), 1 O-linked glycan (1 site)"/>
</dbReference>
<dbReference type="iPTMnet" id="Q6P4A8"/>
<dbReference type="PhosphoSitePlus" id="Q6P4A8"/>
<dbReference type="BioMuta" id="PLBD1"/>
<dbReference type="DMDM" id="269849630"/>
<dbReference type="jPOST" id="Q6P4A8"/>
<dbReference type="MassIVE" id="Q6P4A8"/>
<dbReference type="PaxDb" id="9606-ENSP00000240617"/>
<dbReference type="PeptideAtlas" id="Q6P4A8"/>
<dbReference type="PRIDE" id="Q6P4A8"/>
<dbReference type="ProteomicsDB" id="66958"/>
<dbReference type="Pumba" id="Q6P4A8"/>
<dbReference type="Antibodypedia" id="23639">
    <property type="antibodies" value="59 antibodies from 12 providers"/>
</dbReference>
<dbReference type="DNASU" id="79887"/>
<dbReference type="Ensembl" id="ENST00000240617.10">
    <property type="protein sequence ID" value="ENSP00000240617.5"/>
    <property type="gene ID" value="ENSG00000121316.11"/>
</dbReference>
<dbReference type="GeneID" id="79887"/>
<dbReference type="KEGG" id="hsa:79887"/>
<dbReference type="MANE-Select" id="ENST00000240617.10">
    <property type="protein sequence ID" value="ENSP00000240617.5"/>
    <property type="RefSeq nucleotide sequence ID" value="NM_024829.6"/>
    <property type="RefSeq protein sequence ID" value="NP_079105.4"/>
</dbReference>
<dbReference type="UCSC" id="uc001rcc.2">
    <property type="organism name" value="human"/>
</dbReference>
<dbReference type="AGR" id="HGNC:26215"/>
<dbReference type="CTD" id="79887"/>
<dbReference type="DisGeNET" id="79887"/>
<dbReference type="GeneCards" id="PLBD1"/>
<dbReference type="HGNC" id="HGNC:26215">
    <property type="gene designation" value="PLBD1"/>
</dbReference>
<dbReference type="HPA" id="ENSG00000121316">
    <property type="expression patterns" value="Tissue enhanced (bone)"/>
</dbReference>
<dbReference type="MIM" id="618486">
    <property type="type" value="gene"/>
</dbReference>
<dbReference type="neXtProt" id="NX_Q6P4A8"/>
<dbReference type="OpenTargets" id="ENSG00000121316"/>
<dbReference type="PharmGKB" id="PA164724597"/>
<dbReference type="VEuPathDB" id="HostDB:ENSG00000121316"/>
<dbReference type="eggNOG" id="KOG3774">
    <property type="taxonomic scope" value="Eukaryota"/>
</dbReference>
<dbReference type="GeneTree" id="ENSGT00530000063509"/>
<dbReference type="HOGENOM" id="CLU_027106_3_0_1"/>
<dbReference type="InParanoid" id="Q6P4A8"/>
<dbReference type="OMA" id="MYDHFTN"/>
<dbReference type="OrthoDB" id="419508at2759"/>
<dbReference type="PAN-GO" id="Q6P4A8">
    <property type="GO annotations" value="3 GO annotations based on evolutionary models"/>
</dbReference>
<dbReference type="PhylomeDB" id="Q6P4A8"/>
<dbReference type="TreeFam" id="TF315042"/>
<dbReference type="BRENDA" id="3.1.1.5">
    <property type="organism ID" value="2681"/>
</dbReference>
<dbReference type="PathwayCommons" id="Q6P4A8"/>
<dbReference type="Reactome" id="R-HSA-1482788">
    <property type="pathway name" value="Acyl chain remodelling of PC"/>
</dbReference>
<dbReference type="Reactome" id="R-HSA-1482839">
    <property type="pathway name" value="Acyl chain remodelling of PE"/>
</dbReference>
<dbReference type="Reactome" id="R-HSA-1482922">
    <property type="pathway name" value="Acyl chain remodelling of PI"/>
</dbReference>
<dbReference type="Reactome" id="R-HSA-1483115">
    <property type="pathway name" value="Hydrolysis of LPC"/>
</dbReference>
<dbReference type="SignaLink" id="Q6P4A8"/>
<dbReference type="BioGRID-ORCS" id="79887">
    <property type="hits" value="8 hits in 1158 CRISPR screens"/>
</dbReference>
<dbReference type="ChiTaRS" id="PLBD1">
    <property type="organism name" value="human"/>
</dbReference>
<dbReference type="GenomeRNAi" id="79887"/>
<dbReference type="Pharos" id="Q6P4A8">
    <property type="development level" value="Tdark"/>
</dbReference>
<dbReference type="PRO" id="PR:Q6P4A8"/>
<dbReference type="Proteomes" id="UP000005640">
    <property type="component" value="Chromosome 12"/>
</dbReference>
<dbReference type="RNAct" id="Q6P4A8">
    <property type="molecule type" value="protein"/>
</dbReference>
<dbReference type="Bgee" id="ENSG00000121316">
    <property type="expression patterns" value="Expressed in monocyte and 178 other cell types or tissues"/>
</dbReference>
<dbReference type="ExpressionAtlas" id="Q6P4A8">
    <property type="expression patterns" value="baseline and differential"/>
</dbReference>
<dbReference type="GO" id="GO:0005829">
    <property type="term" value="C:cytosol"/>
    <property type="evidence" value="ECO:0000304"/>
    <property type="project" value="Reactome"/>
</dbReference>
<dbReference type="GO" id="GO:0005576">
    <property type="term" value="C:extracellular region"/>
    <property type="evidence" value="ECO:0000318"/>
    <property type="project" value="GO_Central"/>
</dbReference>
<dbReference type="GO" id="GO:0005615">
    <property type="term" value="C:extracellular space"/>
    <property type="evidence" value="ECO:0000314"/>
    <property type="project" value="UniProtKB"/>
</dbReference>
<dbReference type="GO" id="GO:0005764">
    <property type="term" value="C:lysosome"/>
    <property type="evidence" value="ECO:0007669"/>
    <property type="project" value="UniProtKB-SubCell"/>
</dbReference>
<dbReference type="GO" id="GO:0004620">
    <property type="term" value="F:phospholipase activity"/>
    <property type="evidence" value="ECO:0000318"/>
    <property type="project" value="GO_Central"/>
</dbReference>
<dbReference type="GO" id="GO:0009395">
    <property type="term" value="P:phospholipid catabolic process"/>
    <property type="evidence" value="ECO:0000318"/>
    <property type="project" value="GO_Central"/>
</dbReference>
<dbReference type="FunFam" id="1.10.439.20:FF:000002">
    <property type="entry name" value="Phospholipase B-like"/>
    <property type="match status" value="1"/>
</dbReference>
<dbReference type="FunFam" id="2.10.70.60:FF:000001">
    <property type="entry name" value="Phospholipase B-like"/>
    <property type="match status" value="1"/>
</dbReference>
<dbReference type="FunFam" id="3.60.60.20:FF:000001">
    <property type="entry name" value="Phospholipase B-like"/>
    <property type="match status" value="1"/>
</dbReference>
<dbReference type="Gene3D" id="3.60.60.20">
    <property type="match status" value="1"/>
</dbReference>
<dbReference type="Gene3D" id="2.10.70.60">
    <property type="entry name" value="Phospholipase B-like, domain 1"/>
    <property type="match status" value="1"/>
</dbReference>
<dbReference type="Gene3D" id="1.10.439.20">
    <property type="entry name" value="Phospholipase B-like, domain 2"/>
    <property type="match status" value="1"/>
</dbReference>
<dbReference type="InterPro" id="IPR007000">
    <property type="entry name" value="PLipase_B-like"/>
</dbReference>
<dbReference type="InterPro" id="IPR043040">
    <property type="entry name" value="PLipase_B-like_dom1"/>
</dbReference>
<dbReference type="InterPro" id="IPR043041">
    <property type="entry name" value="PLipase_B-like_dom2"/>
</dbReference>
<dbReference type="InterPro" id="IPR043042">
    <property type="entry name" value="PLipase_B-like_dom3"/>
</dbReference>
<dbReference type="PANTHER" id="PTHR12370:SF1">
    <property type="entry name" value="PHOSPHOLIPASE B-LIKE 1"/>
    <property type="match status" value="1"/>
</dbReference>
<dbReference type="PANTHER" id="PTHR12370">
    <property type="entry name" value="PHOSPHOLIPASE B-RELATED"/>
    <property type="match status" value="1"/>
</dbReference>
<dbReference type="Pfam" id="PF04916">
    <property type="entry name" value="Phospholip_B"/>
    <property type="match status" value="1"/>
</dbReference>
<accession>Q6P4A8</accession>
<accession>A8K4E9</accession>
<accession>Q9BVV3</accession>
<accession>Q9H625</accession>